<dbReference type="EC" id="2.3.1.180" evidence="1"/>
<dbReference type="EMBL" id="CP000308">
    <property type="protein sequence ID" value="ABG13894.1"/>
    <property type="molecule type" value="Genomic_DNA"/>
</dbReference>
<dbReference type="RefSeq" id="WP_002210933.1">
    <property type="nucleotide sequence ID" value="NZ_CP009906.1"/>
</dbReference>
<dbReference type="SMR" id="Q1C6M8"/>
<dbReference type="KEGG" id="ypa:YPA_1928"/>
<dbReference type="UniPathway" id="UPA00094"/>
<dbReference type="Proteomes" id="UP000001971">
    <property type="component" value="Chromosome"/>
</dbReference>
<dbReference type="GO" id="GO:0005737">
    <property type="term" value="C:cytoplasm"/>
    <property type="evidence" value="ECO:0007669"/>
    <property type="project" value="UniProtKB-SubCell"/>
</dbReference>
<dbReference type="GO" id="GO:0004315">
    <property type="term" value="F:3-oxoacyl-[acyl-carrier-protein] synthase activity"/>
    <property type="evidence" value="ECO:0007669"/>
    <property type="project" value="InterPro"/>
</dbReference>
<dbReference type="GO" id="GO:0033818">
    <property type="term" value="F:beta-ketoacyl-acyl-carrier-protein synthase III activity"/>
    <property type="evidence" value="ECO:0007669"/>
    <property type="project" value="UniProtKB-UniRule"/>
</dbReference>
<dbReference type="GO" id="GO:0006633">
    <property type="term" value="P:fatty acid biosynthetic process"/>
    <property type="evidence" value="ECO:0007669"/>
    <property type="project" value="UniProtKB-UniRule"/>
</dbReference>
<dbReference type="CDD" id="cd00830">
    <property type="entry name" value="KAS_III"/>
    <property type="match status" value="1"/>
</dbReference>
<dbReference type="FunFam" id="3.40.47.10:FF:000004">
    <property type="entry name" value="3-oxoacyl-[acyl-carrier-protein] synthase 3"/>
    <property type="match status" value="1"/>
</dbReference>
<dbReference type="Gene3D" id="3.40.47.10">
    <property type="match status" value="1"/>
</dbReference>
<dbReference type="HAMAP" id="MF_01815">
    <property type="entry name" value="FabH"/>
    <property type="match status" value="1"/>
</dbReference>
<dbReference type="InterPro" id="IPR013747">
    <property type="entry name" value="ACP_syn_III_C"/>
</dbReference>
<dbReference type="InterPro" id="IPR013751">
    <property type="entry name" value="ACP_syn_III_N"/>
</dbReference>
<dbReference type="InterPro" id="IPR004655">
    <property type="entry name" value="FabH"/>
</dbReference>
<dbReference type="InterPro" id="IPR016039">
    <property type="entry name" value="Thiolase-like"/>
</dbReference>
<dbReference type="NCBIfam" id="TIGR00747">
    <property type="entry name" value="fabH"/>
    <property type="match status" value="1"/>
</dbReference>
<dbReference type="NCBIfam" id="NF006829">
    <property type="entry name" value="PRK09352.1"/>
    <property type="match status" value="1"/>
</dbReference>
<dbReference type="PANTHER" id="PTHR43091">
    <property type="entry name" value="3-OXOACYL-[ACYL-CARRIER-PROTEIN] SYNTHASE"/>
    <property type="match status" value="1"/>
</dbReference>
<dbReference type="PANTHER" id="PTHR43091:SF1">
    <property type="entry name" value="BETA-KETOACYL-[ACYL-CARRIER-PROTEIN] SYNTHASE III, CHLOROPLASTIC"/>
    <property type="match status" value="1"/>
</dbReference>
<dbReference type="Pfam" id="PF08545">
    <property type="entry name" value="ACP_syn_III"/>
    <property type="match status" value="1"/>
</dbReference>
<dbReference type="Pfam" id="PF08541">
    <property type="entry name" value="ACP_syn_III_C"/>
    <property type="match status" value="1"/>
</dbReference>
<dbReference type="SUPFAM" id="SSF53901">
    <property type="entry name" value="Thiolase-like"/>
    <property type="match status" value="1"/>
</dbReference>
<comment type="function">
    <text evidence="1">Catalyzes the condensation reaction of fatty acid synthesis by the addition to an acyl acceptor of two carbons from malonyl-ACP. Catalyzes the first condensation reaction which initiates fatty acid synthesis and may therefore play a role in governing the total rate of fatty acid production. Possesses both acetoacetyl-ACP synthase and acetyl transacylase activities. Its substrate specificity determines the biosynthesis of branched-chain and/or straight-chain of fatty acids.</text>
</comment>
<comment type="catalytic activity">
    <reaction evidence="1">
        <text>malonyl-[ACP] + acetyl-CoA + H(+) = 3-oxobutanoyl-[ACP] + CO2 + CoA</text>
        <dbReference type="Rhea" id="RHEA:12080"/>
        <dbReference type="Rhea" id="RHEA-COMP:9623"/>
        <dbReference type="Rhea" id="RHEA-COMP:9625"/>
        <dbReference type="ChEBI" id="CHEBI:15378"/>
        <dbReference type="ChEBI" id="CHEBI:16526"/>
        <dbReference type="ChEBI" id="CHEBI:57287"/>
        <dbReference type="ChEBI" id="CHEBI:57288"/>
        <dbReference type="ChEBI" id="CHEBI:78449"/>
        <dbReference type="ChEBI" id="CHEBI:78450"/>
        <dbReference type="EC" id="2.3.1.180"/>
    </reaction>
</comment>
<comment type="pathway">
    <text evidence="1">Lipid metabolism; fatty acid biosynthesis.</text>
</comment>
<comment type="subunit">
    <text evidence="1">Homodimer.</text>
</comment>
<comment type="subcellular location">
    <subcellularLocation>
        <location evidence="1">Cytoplasm</location>
    </subcellularLocation>
</comment>
<comment type="domain">
    <text evidence="1">The last Arg residue of the ACP-binding site is essential for the weak association between ACP/AcpP and FabH.</text>
</comment>
<comment type="similarity">
    <text evidence="1">Belongs to the thiolase-like superfamily. FabH family.</text>
</comment>
<name>FABH_YERPA</name>
<keyword id="KW-0012">Acyltransferase</keyword>
<keyword id="KW-0963">Cytoplasm</keyword>
<keyword id="KW-0275">Fatty acid biosynthesis</keyword>
<keyword id="KW-0276">Fatty acid metabolism</keyword>
<keyword id="KW-0444">Lipid biosynthesis</keyword>
<keyword id="KW-0443">Lipid metabolism</keyword>
<keyword id="KW-0511">Multifunctional enzyme</keyword>
<keyword id="KW-0808">Transferase</keyword>
<sequence>MYTKILGTGSYLPVQVRSNADLEKMVDTSDEWIVTRTGIRERRIAGLDETVATMGFQAAEKALEMAGIDKDDIGLIIVATTSSSHAFPSSACQVQRMLGIKDAASFDLAAACAGFTYALSVADQYVKSGAVKHAIVIGSDVLSRALDPEDRGTIILFGDGAGAVVLGASEQPGIMSTHLHADGRYGELLALPYPDRQQDQPAYVTMAGNEVFKVAVTELAHIVDETLQANNLDRTALDWLVPHQANLRIISATAKKLGMGMDKVVITLDRHGNTSAASVPSAFDEAVRDGRIQRGQLVLLEAFGGGFTWGSALVRF</sequence>
<reference key="1">
    <citation type="journal article" date="2006" name="J. Bacteriol.">
        <title>Complete genome sequence of Yersinia pestis strains Antiqua and Nepal516: evidence of gene reduction in an emerging pathogen.</title>
        <authorList>
            <person name="Chain P.S.G."/>
            <person name="Hu P."/>
            <person name="Malfatti S.A."/>
            <person name="Radnedge L."/>
            <person name="Larimer F."/>
            <person name="Vergez L.M."/>
            <person name="Worsham P."/>
            <person name="Chu M.C."/>
            <person name="Andersen G.L."/>
        </authorList>
    </citation>
    <scope>NUCLEOTIDE SEQUENCE [LARGE SCALE GENOMIC DNA]</scope>
    <source>
        <strain>Antiqua</strain>
    </source>
</reference>
<feature type="chain" id="PRO_1000056447" description="Beta-ketoacyl-[acyl-carrier-protein] synthase III">
    <location>
        <begin position="1"/>
        <end position="316"/>
    </location>
</feature>
<feature type="region of interest" description="ACP-binding" evidence="1">
    <location>
        <begin position="244"/>
        <end position="248"/>
    </location>
</feature>
<feature type="active site" evidence="1">
    <location>
        <position position="112"/>
    </location>
</feature>
<feature type="active site" evidence="1">
    <location>
        <position position="243"/>
    </location>
</feature>
<feature type="active site" evidence="1">
    <location>
        <position position="273"/>
    </location>
</feature>
<evidence type="ECO:0000255" key="1">
    <source>
        <dbReference type="HAMAP-Rule" id="MF_01815"/>
    </source>
</evidence>
<proteinExistence type="inferred from homology"/>
<accession>Q1C6M8</accession>
<organism>
    <name type="scientific">Yersinia pestis bv. Antiqua (strain Antiqua)</name>
    <dbReference type="NCBI Taxonomy" id="360102"/>
    <lineage>
        <taxon>Bacteria</taxon>
        <taxon>Pseudomonadati</taxon>
        <taxon>Pseudomonadota</taxon>
        <taxon>Gammaproteobacteria</taxon>
        <taxon>Enterobacterales</taxon>
        <taxon>Yersiniaceae</taxon>
        <taxon>Yersinia</taxon>
    </lineage>
</organism>
<protein>
    <recommendedName>
        <fullName evidence="1">Beta-ketoacyl-[acyl-carrier-protein] synthase III</fullName>
        <shortName evidence="1">Beta-ketoacyl-ACP synthase III</shortName>
        <shortName evidence="1">KAS III</shortName>
        <ecNumber evidence="1">2.3.1.180</ecNumber>
    </recommendedName>
    <alternativeName>
        <fullName evidence="1">3-oxoacyl-[acyl-carrier-protein] synthase 3</fullName>
    </alternativeName>
    <alternativeName>
        <fullName evidence="1">3-oxoacyl-[acyl-carrier-protein] synthase III</fullName>
    </alternativeName>
</protein>
<gene>
    <name evidence="1" type="primary">fabH</name>
    <name type="ordered locus">YPA_1928</name>
</gene>